<gene>
    <name evidence="1" type="primary">aroA</name>
    <name type="ordered locus">BQ2027_MB3256</name>
</gene>
<protein>
    <recommendedName>
        <fullName evidence="1">3-phosphoshikimate 1-carboxyvinyltransferase</fullName>
        <ecNumber evidence="1">2.5.1.19</ecNumber>
    </recommendedName>
    <alternativeName>
        <fullName evidence="1">5-enolpyruvylshikimate-3-phosphate synthase</fullName>
        <shortName evidence="1">EPSP synthase</shortName>
        <shortName evidence="1">EPSPS</shortName>
    </alternativeName>
</protein>
<feature type="chain" id="PRO_0000088271" description="3-phosphoshikimate 1-carboxyvinyltransferase">
    <location>
        <begin position="1"/>
        <end position="450"/>
    </location>
</feature>
<feature type="region of interest" description="Disordered" evidence="2">
    <location>
        <begin position="426"/>
        <end position="450"/>
    </location>
</feature>
<feature type="active site" description="Proton acceptor" evidence="1">
    <location>
        <position position="311"/>
    </location>
</feature>
<feature type="binding site" evidence="1">
    <location>
        <position position="23"/>
    </location>
    <ligand>
        <name>3-phosphoshikimate</name>
        <dbReference type="ChEBI" id="CHEBI:145989"/>
    </ligand>
</feature>
<feature type="binding site" evidence="1">
    <location>
        <position position="23"/>
    </location>
    <ligand>
        <name>phosphoenolpyruvate</name>
        <dbReference type="ChEBI" id="CHEBI:58702"/>
    </ligand>
</feature>
<feature type="binding site" evidence="1">
    <location>
        <position position="24"/>
    </location>
    <ligand>
        <name>3-phosphoshikimate</name>
        <dbReference type="ChEBI" id="CHEBI:145989"/>
    </ligand>
</feature>
<feature type="binding site" evidence="1">
    <location>
        <position position="28"/>
    </location>
    <ligand>
        <name>3-phosphoshikimate</name>
        <dbReference type="ChEBI" id="CHEBI:145989"/>
    </ligand>
</feature>
<feature type="binding site" evidence="1">
    <location>
        <position position="96"/>
    </location>
    <ligand>
        <name>phosphoenolpyruvate</name>
        <dbReference type="ChEBI" id="CHEBI:58702"/>
    </ligand>
</feature>
<feature type="binding site" evidence="1">
    <location>
        <position position="124"/>
    </location>
    <ligand>
        <name>phosphoenolpyruvate</name>
        <dbReference type="ChEBI" id="CHEBI:58702"/>
    </ligand>
</feature>
<feature type="binding site" evidence="1">
    <location>
        <position position="167"/>
    </location>
    <ligand>
        <name>3-phosphoshikimate</name>
        <dbReference type="ChEBI" id="CHEBI:145989"/>
    </ligand>
</feature>
<feature type="binding site" evidence="1">
    <location>
        <position position="168"/>
    </location>
    <ligand>
        <name>3-phosphoshikimate</name>
        <dbReference type="ChEBI" id="CHEBI:145989"/>
    </ligand>
</feature>
<feature type="binding site" evidence="1">
    <location>
        <position position="169"/>
    </location>
    <ligand>
        <name>3-phosphoshikimate</name>
        <dbReference type="ChEBI" id="CHEBI:145989"/>
    </ligand>
</feature>
<feature type="binding site" evidence="1">
    <location>
        <position position="169"/>
    </location>
    <ligand>
        <name>phosphoenolpyruvate</name>
        <dbReference type="ChEBI" id="CHEBI:58702"/>
    </ligand>
</feature>
<feature type="binding site" evidence="1">
    <location>
        <position position="196"/>
    </location>
    <ligand>
        <name>3-phosphoshikimate</name>
        <dbReference type="ChEBI" id="CHEBI:145989"/>
    </ligand>
</feature>
<feature type="binding site" evidence="1">
    <location>
        <position position="311"/>
    </location>
    <ligand>
        <name>3-phosphoshikimate</name>
        <dbReference type="ChEBI" id="CHEBI:145989"/>
    </ligand>
</feature>
<feature type="binding site" evidence="1">
    <location>
        <position position="340"/>
    </location>
    <ligand>
        <name>3-phosphoshikimate</name>
        <dbReference type="ChEBI" id="CHEBI:145989"/>
    </ligand>
</feature>
<feature type="binding site" evidence="1">
    <location>
        <position position="344"/>
    </location>
    <ligand>
        <name>phosphoenolpyruvate</name>
        <dbReference type="ChEBI" id="CHEBI:58702"/>
    </ligand>
</feature>
<feature type="binding site" evidence="1">
    <location>
        <position position="385"/>
    </location>
    <ligand>
        <name>phosphoenolpyruvate</name>
        <dbReference type="ChEBI" id="CHEBI:58702"/>
    </ligand>
</feature>
<feature type="binding site" evidence="1">
    <location>
        <position position="410"/>
    </location>
    <ligand>
        <name>phosphoenolpyruvate</name>
        <dbReference type="ChEBI" id="CHEBI:58702"/>
    </ligand>
</feature>
<dbReference type="EC" id="2.5.1.19" evidence="1"/>
<dbReference type="EMBL" id="LT708304">
    <property type="protein sequence ID" value="SIU01885.1"/>
    <property type="molecule type" value="Genomic_DNA"/>
</dbReference>
<dbReference type="RefSeq" id="NP_856901.1">
    <property type="nucleotide sequence ID" value="NC_002945.3"/>
</dbReference>
<dbReference type="RefSeq" id="WP_010950853.1">
    <property type="nucleotide sequence ID" value="NC_002945.4"/>
</dbReference>
<dbReference type="SMR" id="Q7TWY4"/>
<dbReference type="KEGG" id="mbo:BQ2027_MB3256"/>
<dbReference type="PATRIC" id="fig|233413.5.peg.3583"/>
<dbReference type="UniPathway" id="UPA00053">
    <property type="reaction ID" value="UER00089"/>
</dbReference>
<dbReference type="Proteomes" id="UP000001419">
    <property type="component" value="Chromosome"/>
</dbReference>
<dbReference type="GO" id="GO:0005737">
    <property type="term" value="C:cytoplasm"/>
    <property type="evidence" value="ECO:0007669"/>
    <property type="project" value="UniProtKB-SubCell"/>
</dbReference>
<dbReference type="GO" id="GO:0003866">
    <property type="term" value="F:3-phosphoshikimate 1-carboxyvinyltransferase activity"/>
    <property type="evidence" value="ECO:0007669"/>
    <property type="project" value="UniProtKB-UniRule"/>
</dbReference>
<dbReference type="GO" id="GO:0008652">
    <property type="term" value="P:amino acid biosynthetic process"/>
    <property type="evidence" value="ECO:0007669"/>
    <property type="project" value="UniProtKB-KW"/>
</dbReference>
<dbReference type="GO" id="GO:0009073">
    <property type="term" value="P:aromatic amino acid family biosynthetic process"/>
    <property type="evidence" value="ECO:0007669"/>
    <property type="project" value="UniProtKB-KW"/>
</dbReference>
<dbReference type="GO" id="GO:0009423">
    <property type="term" value="P:chorismate biosynthetic process"/>
    <property type="evidence" value="ECO:0007669"/>
    <property type="project" value="UniProtKB-UniRule"/>
</dbReference>
<dbReference type="CDD" id="cd01556">
    <property type="entry name" value="EPSP_synthase"/>
    <property type="match status" value="1"/>
</dbReference>
<dbReference type="FunFam" id="3.65.10.10:FF:000010">
    <property type="entry name" value="3-phosphoshikimate 1-carboxyvinyltransferase"/>
    <property type="match status" value="1"/>
</dbReference>
<dbReference type="FunFam" id="3.65.10.10:FF:000011">
    <property type="entry name" value="3-phosphoshikimate 1-carboxyvinyltransferase"/>
    <property type="match status" value="1"/>
</dbReference>
<dbReference type="Gene3D" id="3.65.10.10">
    <property type="entry name" value="Enolpyruvate transferase domain"/>
    <property type="match status" value="2"/>
</dbReference>
<dbReference type="HAMAP" id="MF_00210">
    <property type="entry name" value="EPSP_synth"/>
    <property type="match status" value="1"/>
</dbReference>
<dbReference type="InterPro" id="IPR001986">
    <property type="entry name" value="Enolpyruvate_Tfrase_dom"/>
</dbReference>
<dbReference type="InterPro" id="IPR036968">
    <property type="entry name" value="Enolpyruvate_Tfrase_sf"/>
</dbReference>
<dbReference type="InterPro" id="IPR006264">
    <property type="entry name" value="EPSP_synthase"/>
</dbReference>
<dbReference type="InterPro" id="IPR023193">
    <property type="entry name" value="EPSP_synthase_CS"/>
</dbReference>
<dbReference type="InterPro" id="IPR013792">
    <property type="entry name" value="RNA3'P_cycl/enolpyr_Trfase_a/b"/>
</dbReference>
<dbReference type="NCBIfam" id="TIGR01356">
    <property type="entry name" value="aroA"/>
    <property type="match status" value="1"/>
</dbReference>
<dbReference type="PANTHER" id="PTHR21090">
    <property type="entry name" value="AROM/DEHYDROQUINATE SYNTHASE"/>
    <property type="match status" value="1"/>
</dbReference>
<dbReference type="PANTHER" id="PTHR21090:SF5">
    <property type="entry name" value="PENTAFUNCTIONAL AROM POLYPEPTIDE"/>
    <property type="match status" value="1"/>
</dbReference>
<dbReference type="Pfam" id="PF00275">
    <property type="entry name" value="EPSP_synthase"/>
    <property type="match status" value="1"/>
</dbReference>
<dbReference type="PIRSF" id="PIRSF000505">
    <property type="entry name" value="EPSPS"/>
    <property type="match status" value="1"/>
</dbReference>
<dbReference type="SUPFAM" id="SSF55205">
    <property type="entry name" value="EPT/RTPC-like"/>
    <property type="match status" value="1"/>
</dbReference>
<dbReference type="PROSITE" id="PS00104">
    <property type="entry name" value="EPSP_SYNTHASE_1"/>
    <property type="match status" value="1"/>
</dbReference>
<dbReference type="PROSITE" id="PS00885">
    <property type="entry name" value="EPSP_SYNTHASE_2"/>
    <property type="match status" value="1"/>
</dbReference>
<accession>Q7TWY4</accession>
<accession>A0A1R3Y5A7</accession>
<accession>X2BMZ8</accession>
<keyword id="KW-0028">Amino-acid biosynthesis</keyword>
<keyword id="KW-0057">Aromatic amino acid biosynthesis</keyword>
<keyword id="KW-0963">Cytoplasm</keyword>
<keyword id="KW-1185">Reference proteome</keyword>
<keyword id="KW-0808">Transferase</keyword>
<proteinExistence type="inferred from homology"/>
<name>AROA_MYCBO</name>
<evidence type="ECO:0000255" key="1">
    <source>
        <dbReference type="HAMAP-Rule" id="MF_00210"/>
    </source>
</evidence>
<evidence type="ECO:0000256" key="2">
    <source>
        <dbReference type="SAM" id="MobiDB-lite"/>
    </source>
</evidence>
<sequence>MKTWPAPTAPTPVRATVTVPGSKSQTNRALVLAALAAAQGRGASTISGALRSRDTELMLDALQTLGLRVDGVGSELTVSGRIEPGPGARVDCGLAGTVLRFVPPLAALGSVPVTFDGDQQARGRPIAPLLDALRELGVAVDGTGLPFRVHGNGSLAGGTVAIDASASSQFVSGLLLSAASFTDGLTVQHTGSSLPSAPHIAMTAAMLRQAGVDIDDSTPNRWQVRPGPVAARRWDIEPDLTNAVAFLSAAVVSGGTVRITGWPRVSVQPADHILAILRQLNAVVIHADSSLEVRGPTGYDGFDVDLRAVGELTPSVAALAALASPGSVSRLSGIAHLRGHETDRLAALSTEINRLGGTCRETPDGLVITATPLRPGIWRAYADHRMAMAGAIIGLRVAGVEVDDIAATTKTLPEFPRLWAEMVGPGQGWGYPQPRSGQRARRATGQGSGG</sequence>
<comment type="function">
    <text evidence="1">Catalyzes the transfer of the enolpyruvyl moiety of phosphoenolpyruvate (PEP) to the 5-hydroxyl of shikimate-3-phosphate (S3P) to produce enolpyruvyl shikimate-3-phosphate and inorganic phosphate.</text>
</comment>
<comment type="catalytic activity">
    <reaction evidence="1">
        <text>3-phosphoshikimate + phosphoenolpyruvate = 5-O-(1-carboxyvinyl)-3-phosphoshikimate + phosphate</text>
        <dbReference type="Rhea" id="RHEA:21256"/>
        <dbReference type="ChEBI" id="CHEBI:43474"/>
        <dbReference type="ChEBI" id="CHEBI:57701"/>
        <dbReference type="ChEBI" id="CHEBI:58702"/>
        <dbReference type="ChEBI" id="CHEBI:145989"/>
        <dbReference type="EC" id="2.5.1.19"/>
    </reaction>
    <physiologicalReaction direction="left-to-right" evidence="1">
        <dbReference type="Rhea" id="RHEA:21257"/>
    </physiologicalReaction>
</comment>
<comment type="pathway">
    <text evidence="1">Metabolic intermediate biosynthesis; chorismate biosynthesis; chorismate from D-erythrose 4-phosphate and phosphoenolpyruvate: step 6/7.</text>
</comment>
<comment type="subunit">
    <text evidence="1">Monomer.</text>
</comment>
<comment type="subcellular location">
    <subcellularLocation>
        <location evidence="1">Cytoplasm</location>
    </subcellularLocation>
</comment>
<comment type="similarity">
    <text evidence="1">Belongs to the EPSP synthase family.</text>
</comment>
<organism>
    <name type="scientific">Mycobacterium bovis (strain ATCC BAA-935 / AF2122/97)</name>
    <dbReference type="NCBI Taxonomy" id="233413"/>
    <lineage>
        <taxon>Bacteria</taxon>
        <taxon>Bacillati</taxon>
        <taxon>Actinomycetota</taxon>
        <taxon>Actinomycetes</taxon>
        <taxon>Mycobacteriales</taxon>
        <taxon>Mycobacteriaceae</taxon>
        <taxon>Mycobacterium</taxon>
        <taxon>Mycobacterium tuberculosis complex</taxon>
    </lineage>
</organism>
<reference key="1">
    <citation type="journal article" date="2003" name="Proc. Natl. Acad. Sci. U.S.A.">
        <title>The complete genome sequence of Mycobacterium bovis.</title>
        <authorList>
            <person name="Garnier T."/>
            <person name="Eiglmeier K."/>
            <person name="Camus J.-C."/>
            <person name="Medina N."/>
            <person name="Mansoor H."/>
            <person name="Pryor M."/>
            <person name="Duthoy S."/>
            <person name="Grondin S."/>
            <person name="Lacroix C."/>
            <person name="Monsempe C."/>
            <person name="Simon S."/>
            <person name="Harris B."/>
            <person name="Atkin R."/>
            <person name="Doggett J."/>
            <person name="Mayes R."/>
            <person name="Keating L."/>
            <person name="Wheeler P.R."/>
            <person name="Parkhill J."/>
            <person name="Barrell B.G."/>
            <person name="Cole S.T."/>
            <person name="Gordon S.V."/>
            <person name="Hewinson R.G."/>
        </authorList>
    </citation>
    <scope>NUCLEOTIDE SEQUENCE [LARGE SCALE GENOMIC DNA]</scope>
    <source>
        <strain>ATCC BAA-935 / AF2122/97</strain>
    </source>
</reference>
<reference key="2">
    <citation type="journal article" date="2017" name="Genome Announc.">
        <title>Updated reference genome sequence and annotation of Mycobacterium bovis AF2122/97.</title>
        <authorList>
            <person name="Malone K.M."/>
            <person name="Farrell D."/>
            <person name="Stuber T.P."/>
            <person name="Schubert O.T."/>
            <person name="Aebersold R."/>
            <person name="Robbe-Austerman S."/>
            <person name="Gordon S.V."/>
        </authorList>
    </citation>
    <scope>NUCLEOTIDE SEQUENCE [LARGE SCALE GENOMIC DNA]</scope>
    <scope>GENOME REANNOTATION</scope>
    <source>
        <strain>ATCC BAA-935 / AF2122/97</strain>
    </source>
</reference>